<accession>A4IGH4</accession>
<accession>B0UXG2</accession>
<organism>
    <name type="scientific">Danio rerio</name>
    <name type="common">Zebrafish</name>
    <name type="synonym">Brachydanio rerio</name>
    <dbReference type="NCBI Taxonomy" id="7955"/>
    <lineage>
        <taxon>Eukaryota</taxon>
        <taxon>Metazoa</taxon>
        <taxon>Chordata</taxon>
        <taxon>Craniata</taxon>
        <taxon>Vertebrata</taxon>
        <taxon>Euteleostomi</taxon>
        <taxon>Actinopterygii</taxon>
        <taxon>Neopterygii</taxon>
        <taxon>Teleostei</taxon>
        <taxon>Ostariophysi</taxon>
        <taxon>Cypriniformes</taxon>
        <taxon>Danionidae</taxon>
        <taxon>Danioninae</taxon>
        <taxon>Danio</taxon>
    </lineage>
</organism>
<gene>
    <name type="primary">wdr4</name>
    <name type="ORF">si:ch211-140m22.6</name>
</gene>
<keyword id="KW-0539">Nucleus</keyword>
<keyword id="KW-1185">Reference proteome</keyword>
<keyword id="KW-0677">Repeat</keyword>
<keyword id="KW-0819">tRNA processing</keyword>
<keyword id="KW-0853">WD repeat</keyword>
<name>WDR4_DANRE</name>
<reference key="1">
    <citation type="journal article" date="2013" name="Nature">
        <title>The zebrafish reference genome sequence and its relationship to the human genome.</title>
        <authorList>
            <person name="Howe K."/>
            <person name="Clark M.D."/>
            <person name="Torroja C.F."/>
            <person name="Torrance J."/>
            <person name="Berthelot C."/>
            <person name="Muffato M."/>
            <person name="Collins J.E."/>
            <person name="Humphray S."/>
            <person name="McLaren K."/>
            <person name="Matthews L."/>
            <person name="McLaren S."/>
            <person name="Sealy I."/>
            <person name="Caccamo M."/>
            <person name="Churcher C."/>
            <person name="Scott C."/>
            <person name="Barrett J.C."/>
            <person name="Koch R."/>
            <person name="Rauch G.J."/>
            <person name="White S."/>
            <person name="Chow W."/>
            <person name="Kilian B."/>
            <person name="Quintais L.T."/>
            <person name="Guerra-Assuncao J.A."/>
            <person name="Zhou Y."/>
            <person name="Gu Y."/>
            <person name="Yen J."/>
            <person name="Vogel J.H."/>
            <person name="Eyre T."/>
            <person name="Redmond S."/>
            <person name="Banerjee R."/>
            <person name="Chi J."/>
            <person name="Fu B."/>
            <person name="Langley E."/>
            <person name="Maguire S.F."/>
            <person name="Laird G.K."/>
            <person name="Lloyd D."/>
            <person name="Kenyon E."/>
            <person name="Donaldson S."/>
            <person name="Sehra H."/>
            <person name="Almeida-King J."/>
            <person name="Loveland J."/>
            <person name="Trevanion S."/>
            <person name="Jones M."/>
            <person name="Quail M."/>
            <person name="Willey D."/>
            <person name="Hunt A."/>
            <person name="Burton J."/>
            <person name="Sims S."/>
            <person name="McLay K."/>
            <person name="Plumb B."/>
            <person name="Davis J."/>
            <person name="Clee C."/>
            <person name="Oliver K."/>
            <person name="Clark R."/>
            <person name="Riddle C."/>
            <person name="Elliot D."/>
            <person name="Threadgold G."/>
            <person name="Harden G."/>
            <person name="Ware D."/>
            <person name="Begum S."/>
            <person name="Mortimore B."/>
            <person name="Kerry G."/>
            <person name="Heath P."/>
            <person name="Phillimore B."/>
            <person name="Tracey A."/>
            <person name="Corby N."/>
            <person name="Dunn M."/>
            <person name="Johnson C."/>
            <person name="Wood J."/>
            <person name="Clark S."/>
            <person name="Pelan S."/>
            <person name="Griffiths G."/>
            <person name="Smith M."/>
            <person name="Glithero R."/>
            <person name="Howden P."/>
            <person name="Barker N."/>
            <person name="Lloyd C."/>
            <person name="Stevens C."/>
            <person name="Harley J."/>
            <person name="Holt K."/>
            <person name="Panagiotidis G."/>
            <person name="Lovell J."/>
            <person name="Beasley H."/>
            <person name="Henderson C."/>
            <person name="Gordon D."/>
            <person name="Auger K."/>
            <person name="Wright D."/>
            <person name="Collins J."/>
            <person name="Raisen C."/>
            <person name="Dyer L."/>
            <person name="Leung K."/>
            <person name="Robertson L."/>
            <person name="Ambridge K."/>
            <person name="Leongamornlert D."/>
            <person name="McGuire S."/>
            <person name="Gilderthorp R."/>
            <person name="Griffiths C."/>
            <person name="Manthravadi D."/>
            <person name="Nichol S."/>
            <person name="Barker G."/>
            <person name="Whitehead S."/>
            <person name="Kay M."/>
            <person name="Brown J."/>
            <person name="Murnane C."/>
            <person name="Gray E."/>
            <person name="Humphries M."/>
            <person name="Sycamore N."/>
            <person name="Barker D."/>
            <person name="Saunders D."/>
            <person name="Wallis J."/>
            <person name="Babbage A."/>
            <person name="Hammond S."/>
            <person name="Mashreghi-Mohammadi M."/>
            <person name="Barr L."/>
            <person name="Martin S."/>
            <person name="Wray P."/>
            <person name="Ellington A."/>
            <person name="Matthews N."/>
            <person name="Ellwood M."/>
            <person name="Woodmansey R."/>
            <person name="Clark G."/>
            <person name="Cooper J."/>
            <person name="Tromans A."/>
            <person name="Grafham D."/>
            <person name="Skuce C."/>
            <person name="Pandian R."/>
            <person name="Andrews R."/>
            <person name="Harrison E."/>
            <person name="Kimberley A."/>
            <person name="Garnett J."/>
            <person name="Fosker N."/>
            <person name="Hall R."/>
            <person name="Garner P."/>
            <person name="Kelly D."/>
            <person name="Bird C."/>
            <person name="Palmer S."/>
            <person name="Gehring I."/>
            <person name="Berger A."/>
            <person name="Dooley C.M."/>
            <person name="Ersan-Urun Z."/>
            <person name="Eser C."/>
            <person name="Geiger H."/>
            <person name="Geisler M."/>
            <person name="Karotki L."/>
            <person name="Kirn A."/>
            <person name="Konantz J."/>
            <person name="Konantz M."/>
            <person name="Oberlander M."/>
            <person name="Rudolph-Geiger S."/>
            <person name="Teucke M."/>
            <person name="Lanz C."/>
            <person name="Raddatz G."/>
            <person name="Osoegawa K."/>
            <person name="Zhu B."/>
            <person name="Rapp A."/>
            <person name="Widaa S."/>
            <person name="Langford C."/>
            <person name="Yang F."/>
            <person name="Schuster S.C."/>
            <person name="Carter N.P."/>
            <person name="Harrow J."/>
            <person name="Ning Z."/>
            <person name="Herrero J."/>
            <person name="Searle S.M."/>
            <person name="Enright A."/>
            <person name="Geisler R."/>
            <person name="Plasterk R.H."/>
            <person name="Lee C."/>
            <person name="Westerfield M."/>
            <person name="de Jong P.J."/>
            <person name="Zon L.I."/>
            <person name="Postlethwait J.H."/>
            <person name="Nusslein-Volhard C."/>
            <person name="Hubbard T.J."/>
            <person name="Roest Crollius H."/>
            <person name="Rogers J."/>
            <person name="Stemple D.L."/>
        </authorList>
    </citation>
    <scope>NUCLEOTIDE SEQUENCE [LARGE SCALE GENOMIC DNA]</scope>
    <source>
        <strain>Tuebingen</strain>
    </source>
</reference>
<reference key="2">
    <citation type="submission" date="2007-03" db="EMBL/GenBank/DDBJ databases">
        <authorList>
            <consortium name="NIH - Zebrafish Gene Collection (ZGC) project"/>
        </authorList>
    </citation>
    <scope>NUCLEOTIDE SEQUENCE [LARGE SCALE MRNA]</scope>
    <source>
        <tissue>Ovary</tissue>
    </source>
</reference>
<comment type="function">
    <text evidence="1">Non-catalytic component of the METTL1-WDR4 methyltransferase complex required for the formation of N(7)-methylguanine in a subset of RNA species, such as tRNAs, mRNAs and microRNAs (miRNAs). In the METTL1-WDR4 methyltransferase complex, wdr4 acts as a scaffold for tRNA-binding. Required for the formation of N(7)-methylguanine at position 46 (m7G46) in a large subset of tRNAs that contain the 5'-RAGGU-3' motif within the variable loop. M7G46 interacts with C13-G22 in the D-loop to stabilize tRNA tertiary structure and protect tRNAs from decay. Also required for the formation of N(7)-methylguanine at internal sites in a subset of mRNAs. Also required for methylation of a specific subset of miRNAs.</text>
</comment>
<comment type="pathway">
    <text evidence="1">tRNA modification; N(7)-methylguanine-tRNA biosynthesis.</text>
</comment>
<comment type="subunit">
    <text evidence="1">Non-catalytic component of the METTL1-WDR4 complex, composed of mettl1 and wdr4.</text>
</comment>
<comment type="subcellular location">
    <subcellularLocation>
        <location evidence="1">Nucleus</location>
    </subcellularLocation>
</comment>
<comment type="similarity">
    <text evidence="1">Belongs to the WD repeat TRM82 family.</text>
</comment>
<comment type="sequence caution" evidence="3">
    <conflict type="erroneous initiation">
        <sequence resource="EMBL-CDS" id="AAI35102"/>
    </conflict>
</comment>
<sequence length="413" mass="46240">MAVVCSKADWFVTSCSTTLVAVNLKQSREPFVFDCSKAEKKPKEADVDNKSAGEGSEEKDSDSILAFAISASGKHVALTDDHKRLVLFCTEPSWKCISTRWVVRRCTSLAFTQAEDELYVADKSGDVYSFSILEPHKAGELKLGHLSMLLDVALSPDDKYIITADRDEKIRVSFRRSPYNIQAFCLGHTEFVSSLLVPAGHPDWLLSGSGDGTVNVWHYETGRRLHSVDMRKFGLDSENTEKRFAVSRIISSPDGQHVAVQCEGFPSVQLFTVDCGTEGLLKPADTLTLPLSPWDVTFDSENQLWVLLESEDMKVLLYRHSEQHWRLCDSESPELKKVTNALQTQWHLFKGSVGLESQFKHLYKVNFDNMASYLQKKQERLDLEHKKRAAAANGSKPNKKSKTESGAVPQSTS</sequence>
<proteinExistence type="evidence at transcript level"/>
<evidence type="ECO:0000255" key="1">
    <source>
        <dbReference type="HAMAP-Rule" id="MF_03056"/>
    </source>
</evidence>
<evidence type="ECO:0000256" key="2">
    <source>
        <dbReference type="SAM" id="MobiDB-lite"/>
    </source>
</evidence>
<evidence type="ECO:0000305" key="3"/>
<protein>
    <recommendedName>
        <fullName evidence="1">tRNA (guanine-N(7)-)-methyltransferase non-catalytic subunit wdr4</fullName>
    </recommendedName>
    <alternativeName>
        <fullName evidence="1">WD repeat-containing protein 4</fullName>
    </alternativeName>
</protein>
<feature type="chain" id="PRO_0000370533" description="tRNA (guanine-N(7)-)-methyltransferase non-catalytic subunit wdr4">
    <location>
        <begin position="1"/>
        <end position="413"/>
    </location>
</feature>
<feature type="repeat" description="WD 1">
    <location>
        <begin position="101"/>
        <end position="140"/>
    </location>
</feature>
<feature type="repeat" description="WD 2">
    <location>
        <begin position="144"/>
        <end position="183"/>
    </location>
</feature>
<feature type="repeat" description="WD 3">
    <location>
        <begin position="187"/>
        <end position="227"/>
    </location>
</feature>
<feature type="repeat" description="WD 4">
    <location>
        <begin position="286"/>
        <end position="328"/>
    </location>
</feature>
<feature type="region of interest" description="Disordered" evidence="2">
    <location>
        <begin position="386"/>
        <end position="413"/>
    </location>
</feature>
<feature type="sequence conflict" description="In Ref. 2; AAI35102." evidence="3" ref="2">
    <original>C</original>
    <variation>G</variation>
    <location>
        <position position="89"/>
    </location>
</feature>
<feature type="sequence conflict" description="In Ref. 2; AAI35102." evidence="3" ref="2">
    <original>G</original>
    <variation>S</variation>
    <location>
        <position position="279"/>
    </location>
</feature>
<feature type="sequence conflict" description="In Ref. 2; AAI35102." evidence="3" ref="2">
    <original>H</original>
    <variation>N</variation>
    <location>
        <position position="385"/>
    </location>
</feature>
<feature type="sequence conflict" description="In Ref. 2; AAI35102." evidence="3" ref="2">
    <original>A</original>
    <variation>P</variation>
    <location>
        <position position="407"/>
    </location>
</feature>
<dbReference type="EMBL" id="CR361548">
    <property type="protein sequence ID" value="CAQ13728.1"/>
    <property type="molecule type" value="Genomic_DNA"/>
</dbReference>
<dbReference type="EMBL" id="BC135101">
    <property type="protein sequence ID" value="AAI35102.1"/>
    <property type="status" value="ALT_INIT"/>
    <property type="molecule type" value="mRNA"/>
</dbReference>
<dbReference type="SMR" id="A4IGH4"/>
<dbReference type="FunCoup" id="A4IGH4">
    <property type="interactions" value="1210"/>
</dbReference>
<dbReference type="STRING" id="7955.ENSDARP00000109363"/>
<dbReference type="PaxDb" id="7955-ENSDARP00000103752"/>
<dbReference type="PeptideAtlas" id="A4IGH4"/>
<dbReference type="AGR" id="ZFIN:ZDB-GENE-060810-10"/>
<dbReference type="ZFIN" id="ZDB-GENE-060810-10">
    <property type="gene designation" value="wdr4"/>
</dbReference>
<dbReference type="eggNOG" id="KOG3914">
    <property type="taxonomic scope" value="Eukaryota"/>
</dbReference>
<dbReference type="InParanoid" id="A4IGH4"/>
<dbReference type="PhylomeDB" id="A4IGH4"/>
<dbReference type="TreeFam" id="TF105877"/>
<dbReference type="UniPathway" id="UPA00989"/>
<dbReference type="PRO" id="PR:A4IGH4"/>
<dbReference type="Proteomes" id="UP000000437">
    <property type="component" value="Unplaced"/>
</dbReference>
<dbReference type="GO" id="GO:0005829">
    <property type="term" value="C:cytosol"/>
    <property type="evidence" value="ECO:0000318"/>
    <property type="project" value="GO_Central"/>
</dbReference>
<dbReference type="GO" id="GO:0005634">
    <property type="term" value="C:nucleus"/>
    <property type="evidence" value="ECO:0000250"/>
    <property type="project" value="UniProtKB"/>
</dbReference>
<dbReference type="GO" id="GO:0106143">
    <property type="term" value="C:tRNA (m7G46) methyltransferase complex"/>
    <property type="evidence" value="ECO:0000250"/>
    <property type="project" value="UniProtKB"/>
</dbReference>
<dbReference type="GO" id="GO:0043527">
    <property type="term" value="C:tRNA methyltransferase complex"/>
    <property type="evidence" value="ECO:0000318"/>
    <property type="project" value="GO_Central"/>
</dbReference>
<dbReference type="GO" id="GO:0008047">
    <property type="term" value="F:enzyme activator activity"/>
    <property type="evidence" value="ECO:0000250"/>
    <property type="project" value="UniProtKB"/>
</dbReference>
<dbReference type="GO" id="GO:0106004">
    <property type="term" value="P:tRNA (guanine-N7)-methylation"/>
    <property type="evidence" value="ECO:0000250"/>
    <property type="project" value="UniProtKB"/>
</dbReference>
<dbReference type="GO" id="GO:0006400">
    <property type="term" value="P:tRNA modification"/>
    <property type="evidence" value="ECO:0000250"/>
    <property type="project" value="UniProtKB"/>
</dbReference>
<dbReference type="FunFam" id="2.130.10.10:FF:002786">
    <property type="entry name" value="tRNA (guanine-N(7)-)-methyltransferase non-catalytic subunit wdr4"/>
    <property type="match status" value="1"/>
</dbReference>
<dbReference type="Gene3D" id="2.130.10.10">
    <property type="entry name" value="YVTN repeat-like/Quinoprotein amine dehydrogenase"/>
    <property type="match status" value="1"/>
</dbReference>
<dbReference type="HAMAP" id="MF_03056">
    <property type="entry name" value="TRM82"/>
    <property type="match status" value="1"/>
</dbReference>
<dbReference type="InterPro" id="IPR028884">
    <property type="entry name" value="Trm82"/>
</dbReference>
<dbReference type="InterPro" id="IPR015943">
    <property type="entry name" value="WD40/YVTN_repeat-like_dom_sf"/>
</dbReference>
<dbReference type="InterPro" id="IPR036322">
    <property type="entry name" value="WD40_repeat_dom_sf"/>
</dbReference>
<dbReference type="InterPro" id="IPR001680">
    <property type="entry name" value="WD40_rpt"/>
</dbReference>
<dbReference type="PANTHER" id="PTHR16288:SF0">
    <property type="entry name" value="TRNA (GUANINE-N(7)-)-METHYLTRANSFERASE NON-CATALYTIC SUBUNIT WDR4"/>
    <property type="match status" value="1"/>
</dbReference>
<dbReference type="PANTHER" id="PTHR16288">
    <property type="entry name" value="WD40 REPEAT PROTEIN 4"/>
    <property type="match status" value="1"/>
</dbReference>
<dbReference type="Pfam" id="PF00400">
    <property type="entry name" value="WD40"/>
    <property type="match status" value="2"/>
</dbReference>
<dbReference type="SMART" id="SM00320">
    <property type="entry name" value="WD40"/>
    <property type="match status" value="3"/>
</dbReference>
<dbReference type="SUPFAM" id="SSF50978">
    <property type="entry name" value="WD40 repeat-like"/>
    <property type="match status" value="1"/>
</dbReference>
<dbReference type="PROSITE" id="PS50082">
    <property type="entry name" value="WD_REPEATS_2"/>
    <property type="match status" value="1"/>
</dbReference>
<dbReference type="PROSITE" id="PS50294">
    <property type="entry name" value="WD_REPEATS_REGION"/>
    <property type="match status" value="1"/>
</dbReference>